<accession>A6ZRW4</accession>
<accession>B0KZW1</accession>
<gene>
    <name evidence="2" type="primary">NCS2</name>
    <name evidence="2" type="synonym">CTU2</name>
    <name evidence="2" type="synonym">TUC2</name>
    <name type="ORF">SCY_4675</name>
</gene>
<dbReference type="EMBL" id="EF125227">
    <property type="protein sequence ID" value="ABN58637.1"/>
    <property type="molecule type" value="Genomic_DNA"/>
</dbReference>
<dbReference type="EMBL" id="AAFW02000067">
    <property type="protein sequence ID" value="EDN62696.1"/>
    <property type="molecule type" value="Genomic_DNA"/>
</dbReference>
<dbReference type="HOGENOM" id="CLU_024534_1_0_1"/>
<dbReference type="UniPathway" id="UPA00988"/>
<dbReference type="Proteomes" id="UP000007060">
    <property type="component" value="Unassembled WGS sequence"/>
</dbReference>
<dbReference type="GO" id="GO:0005829">
    <property type="term" value="C:cytosol"/>
    <property type="evidence" value="ECO:0000250"/>
    <property type="project" value="UniProtKB"/>
</dbReference>
<dbReference type="GO" id="GO:0016779">
    <property type="term" value="F:nucleotidyltransferase activity"/>
    <property type="evidence" value="ECO:0007669"/>
    <property type="project" value="UniProtKB-UniRule"/>
</dbReference>
<dbReference type="GO" id="GO:0016783">
    <property type="term" value="F:sulfurtransferase activity"/>
    <property type="evidence" value="ECO:0007669"/>
    <property type="project" value="TreeGrafter"/>
</dbReference>
<dbReference type="GO" id="GO:0000049">
    <property type="term" value="F:tRNA binding"/>
    <property type="evidence" value="ECO:0007669"/>
    <property type="project" value="InterPro"/>
</dbReference>
<dbReference type="GO" id="GO:0032447">
    <property type="term" value="P:protein urmylation"/>
    <property type="evidence" value="ECO:0007669"/>
    <property type="project" value="UniProtKB-UniRule"/>
</dbReference>
<dbReference type="GO" id="GO:0034227">
    <property type="term" value="P:tRNA thio-modification"/>
    <property type="evidence" value="ECO:0000250"/>
    <property type="project" value="UniProtKB"/>
</dbReference>
<dbReference type="GO" id="GO:0002143">
    <property type="term" value="P:tRNA wobble position uridine thiolation"/>
    <property type="evidence" value="ECO:0007669"/>
    <property type="project" value="TreeGrafter"/>
</dbReference>
<dbReference type="GO" id="GO:0002098">
    <property type="term" value="P:tRNA wobble uridine modification"/>
    <property type="evidence" value="ECO:0000250"/>
    <property type="project" value="UniProtKB"/>
</dbReference>
<dbReference type="Gene3D" id="3.40.50.620">
    <property type="entry name" value="HUPs"/>
    <property type="match status" value="1"/>
</dbReference>
<dbReference type="HAMAP" id="MF_03054">
    <property type="entry name" value="CTU2"/>
    <property type="match status" value="1"/>
</dbReference>
<dbReference type="InterPro" id="IPR019407">
    <property type="entry name" value="CTU2"/>
</dbReference>
<dbReference type="InterPro" id="IPR014729">
    <property type="entry name" value="Rossmann-like_a/b/a_fold"/>
</dbReference>
<dbReference type="PANTHER" id="PTHR20882">
    <property type="entry name" value="CYTOPLASMIC TRNA 2-THIOLATION PROTEIN 2"/>
    <property type="match status" value="1"/>
</dbReference>
<dbReference type="PANTHER" id="PTHR20882:SF14">
    <property type="entry name" value="CYTOPLASMIC TRNA 2-THIOLATION PROTEIN 2"/>
    <property type="match status" value="1"/>
</dbReference>
<dbReference type="Pfam" id="PF10288">
    <property type="entry name" value="CTU2"/>
    <property type="match status" value="1"/>
</dbReference>
<name>CTU2_YEAS7</name>
<reference key="1">
    <citation type="journal article" date="2008" name="Genetics">
        <title>Sequential elimination of major-effect contributors identifies additional quantitative trait loci conditioning high-temperature growth in yeast.</title>
        <authorList>
            <person name="Sinha H."/>
            <person name="David L."/>
            <person name="Pascon R.C."/>
            <person name="Clauder-Muenster S."/>
            <person name="Krishnakumar S."/>
            <person name="Nguyen M."/>
            <person name="Shi G."/>
            <person name="Dean J."/>
            <person name="Davis R.W."/>
            <person name="Oefner P.J."/>
            <person name="McCusker J.H."/>
            <person name="Steinmetz L.M."/>
        </authorList>
    </citation>
    <scope>NUCLEOTIDE SEQUENCE [GENOMIC DNA]</scope>
</reference>
<reference key="2">
    <citation type="journal article" date="2007" name="Proc. Natl. Acad. Sci. U.S.A.">
        <title>Genome sequencing and comparative analysis of Saccharomyces cerevisiae strain YJM789.</title>
        <authorList>
            <person name="Wei W."/>
            <person name="McCusker J.H."/>
            <person name="Hyman R.W."/>
            <person name="Jones T."/>
            <person name="Ning Y."/>
            <person name="Cao Z."/>
            <person name="Gu Z."/>
            <person name="Bruno D."/>
            <person name="Miranda M."/>
            <person name="Nguyen M."/>
            <person name="Wilhelmy J."/>
            <person name="Komp C."/>
            <person name="Tamse R."/>
            <person name="Wang X."/>
            <person name="Jia P."/>
            <person name="Luedi P."/>
            <person name="Oefner P.J."/>
            <person name="David L."/>
            <person name="Dietrich F.S."/>
            <person name="Li Y."/>
            <person name="Davis R.W."/>
            <person name="Steinmetz L.M."/>
        </authorList>
    </citation>
    <scope>NUCLEOTIDE SEQUENCE [LARGE SCALE GENOMIC DNA]</scope>
    <source>
        <strain>YJM789</strain>
    </source>
</reference>
<protein>
    <recommendedName>
        <fullName evidence="2">Cytoplasmic tRNA 2-thiolation protein 2</fullName>
    </recommendedName>
    <alternativeName>
        <fullName evidence="2">Needs CLA4 to survive protein 2</fullName>
    </alternativeName>
    <alternativeName>
        <fullName evidence="2">Thiolation of uridine in cytoplasmic tRNA protein 2</fullName>
    </alternativeName>
</protein>
<keyword id="KW-0963">Cytoplasm</keyword>
<keyword id="KW-0597">Phosphoprotein</keyword>
<keyword id="KW-0819">tRNA processing</keyword>
<sequence>MECQRCSASARNPATVESRKEKFCDECFIKFVSTKQRKQMMKDEYFRNLFKVIYPFEKEGSVSKILLPLSLSDSGSLVMLDIVHDLLLEQTKQHNNRTGFTVDVLTVFTEENVSVIKERMESLINEKMSQLNKISNIFNVHFIDVNEFFNNASEVSTFIIDNENFEIFSKSKSVDDSNILTLKEILGKYCLNSSSRSDLISIIKTQLIKHFAYENGYNAIMWGHSMTKLSEVIISLVVKGKGSQIATFLDSESFDTLNNKPCKYKNLYPMKDLLSVEIESFLQIRNLAQFLINVEETNVKPNCLIARKSLPSLGQQKLVKNMTINEITNKYFQDIQNDYSNIISTVLRTADKLTQPKSSMAKPSQCQICQSKIYTNPSNWLNRITVTSPYPVETTEEKYLFKQWQDSKLGQSHTHYVELLNEIKQGASNSLDVEDSDVKLCYGCLILLNTSIKDKNLVWPKVDTMDITANATNKNKELSQILDQFEINSDGEE</sequence>
<organism>
    <name type="scientific">Saccharomyces cerevisiae (strain YJM789)</name>
    <name type="common">Baker's yeast</name>
    <dbReference type="NCBI Taxonomy" id="307796"/>
    <lineage>
        <taxon>Eukaryota</taxon>
        <taxon>Fungi</taxon>
        <taxon>Dikarya</taxon>
        <taxon>Ascomycota</taxon>
        <taxon>Saccharomycotina</taxon>
        <taxon>Saccharomycetes</taxon>
        <taxon>Saccharomycetales</taxon>
        <taxon>Saccharomycetaceae</taxon>
        <taxon>Saccharomyces</taxon>
    </lineage>
</organism>
<evidence type="ECO:0000250" key="1">
    <source>
        <dbReference type="UniProtKB" id="P53923"/>
    </source>
</evidence>
<evidence type="ECO:0000255" key="2">
    <source>
        <dbReference type="HAMAP-Rule" id="MF_03054"/>
    </source>
</evidence>
<comment type="function">
    <text evidence="2">Plays a central role in 2-thiolation of mcm(5)S(2)U at tRNA wobble positions of tRNA(Lys), tRNA(Glu) and tRNA(Gln). May act by forming a heterodimer with NCS6 that ligates sulfur from thiocarboxylated URM1 onto the uridine of tRNAs at wobble position. Prior mcm(5) tRNA modification by the elongator complex is required for 2-thiolation. May also be involved in protein urmylation.</text>
</comment>
<comment type="pathway">
    <text evidence="2">tRNA modification; 5-methoxycarbonylmethyl-2-thiouridine-tRNA biosynthesis.</text>
</comment>
<comment type="subunit">
    <text evidence="2">Interacts with NCS6 and URM1. May act by forming a heterodimer with NCS6.</text>
</comment>
<comment type="subcellular location">
    <subcellularLocation>
        <location evidence="2">Cytoplasm</location>
    </subcellularLocation>
</comment>
<comment type="similarity">
    <text evidence="2">Belongs to the CTU2/NCS2 family.</text>
</comment>
<proteinExistence type="inferred from homology"/>
<feature type="chain" id="PRO_0000359410" description="Cytoplasmic tRNA 2-thiolation protein 2">
    <location>
        <begin position="1"/>
        <end position="493"/>
    </location>
</feature>
<feature type="modified residue" description="Phosphoserine" evidence="1">
    <location>
        <position position="489"/>
    </location>
</feature>